<protein>
    <recommendedName>
        <fullName evidence="1">tRNA (guanine-N(1)-)-methyltransferase</fullName>
        <ecNumber evidence="1">2.1.1.228</ecNumber>
    </recommendedName>
    <alternativeName>
        <fullName evidence="1">M1G-methyltransferase</fullName>
    </alternativeName>
    <alternativeName>
        <fullName evidence="1">tRNA [GM37] methyltransferase</fullName>
    </alternativeName>
</protein>
<keyword id="KW-0963">Cytoplasm</keyword>
<keyword id="KW-0489">Methyltransferase</keyword>
<keyword id="KW-1185">Reference proteome</keyword>
<keyword id="KW-0949">S-adenosyl-L-methionine</keyword>
<keyword id="KW-0808">Transferase</keyword>
<keyword id="KW-0819">tRNA processing</keyword>
<accession>Q88WJ2</accession>
<accession>F9UP11</accession>
<proteinExistence type="inferred from homology"/>
<sequence>MQIDILSLFPEMFAGPLHESMIGNAIENDVINVDVTNFRDFTTDKHNHVDDYPYGGGAGMLLQPQPIFDALASVQEKHPAPGRVILLDPAGVQFNQHVAEDFAQEEHLTFICGHYEGYDERIRSLVTDEVSLGDYVLTGGELGAMVMIDATVRLLPGVLGNSESAPGDSFSSGLLEYPQYTRPADFRGMKVPDILLSGDHGKIDDWRLEQALKRTYERRPDMLTGLSLSGKAKQMLADIKADESEV</sequence>
<name>TRMD_LACPL</name>
<comment type="function">
    <text evidence="1">Specifically methylates guanosine-37 in various tRNAs.</text>
</comment>
<comment type="catalytic activity">
    <reaction evidence="1">
        <text>guanosine(37) in tRNA + S-adenosyl-L-methionine = N(1)-methylguanosine(37) in tRNA + S-adenosyl-L-homocysteine + H(+)</text>
        <dbReference type="Rhea" id="RHEA:36899"/>
        <dbReference type="Rhea" id="RHEA-COMP:10145"/>
        <dbReference type="Rhea" id="RHEA-COMP:10147"/>
        <dbReference type="ChEBI" id="CHEBI:15378"/>
        <dbReference type="ChEBI" id="CHEBI:57856"/>
        <dbReference type="ChEBI" id="CHEBI:59789"/>
        <dbReference type="ChEBI" id="CHEBI:73542"/>
        <dbReference type="ChEBI" id="CHEBI:74269"/>
        <dbReference type="EC" id="2.1.1.228"/>
    </reaction>
</comment>
<comment type="subunit">
    <text evidence="1">Homodimer.</text>
</comment>
<comment type="subcellular location">
    <subcellularLocation>
        <location evidence="1">Cytoplasm</location>
    </subcellularLocation>
</comment>
<comment type="similarity">
    <text evidence="1">Belongs to the RNA methyltransferase TrmD family.</text>
</comment>
<evidence type="ECO:0000255" key="1">
    <source>
        <dbReference type="HAMAP-Rule" id="MF_00605"/>
    </source>
</evidence>
<dbReference type="EC" id="2.1.1.228" evidence="1"/>
<dbReference type="EMBL" id="AL935263">
    <property type="protein sequence ID" value="CCC78950.1"/>
    <property type="molecule type" value="Genomic_DNA"/>
</dbReference>
<dbReference type="RefSeq" id="WP_003640384.1">
    <property type="nucleotide sequence ID" value="NC_004567.2"/>
</dbReference>
<dbReference type="RefSeq" id="YP_004889464.1">
    <property type="nucleotide sequence ID" value="NC_004567.2"/>
</dbReference>
<dbReference type="SMR" id="Q88WJ2"/>
<dbReference type="STRING" id="220668.lp_1639"/>
<dbReference type="EnsemblBacteria" id="CCC78950">
    <property type="protein sequence ID" value="CCC78950"/>
    <property type="gene ID" value="lp_1639"/>
</dbReference>
<dbReference type="GeneID" id="89669019"/>
<dbReference type="KEGG" id="lpl:lp_1639"/>
<dbReference type="PATRIC" id="fig|220668.9.peg.1386"/>
<dbReference type="eggNOG" id="COG0336">
    <property type="taxonomic scope" value="Bacteria"/>
</dbReference>
<dbReference type="HOGENOM" id="CLU_047363_0_1_9"/>
<dbReference type="OrthoDB" id="9807416at2"/>
<dbReference type="PhylomeDB" id="Q88WJ2"/>
<dbReference type="Proteomes" id="UP000000432">
    <property type="component" value="Chromosome"/>
</dbReference>
<dbReference type="GO" id="GO:0005829">
    <property type="term" value="C:cytosol"/>
    <property type="evidence" value="ECO:0007669"/>
    <property type="project" value="TreeGrafter"/>
</dbReference>
<dbReference type="GO" id="GO:0052906">
    <property type="term" value="F:tRNA (guanine(37)-N1)-methyltransferase activity"/>
    <property type="evidence" value="ECO:0007669"/>
    <property type="project" value="UniProtKB-UniRule"/>
</dbReference>
<dbReference type="GO" id="GO:0002939">
    <property type="term" value="P:tRNA N1-guanine methylation"/>
    <property type="evidence" value="ECO:0007669"/>
    <property type="project" value="TreeGrafter"/>
</dbReference>
<dbReference type="CDD" id="cd18080">
    <property type="entry name" value="TrmD-like"/>
    <property type="match status" value="1"/>
</dbReference>
<dbReference type="FunFam" id="1.10.1270.20:FF:000001">
    <property type="entry name" value="tRNA (guanine-N(1)-)-methyltransferase"/>
    <property type="match status" value="1"/>
</dbReference>
<dbReference type="FunFam" id="3.40.1280.10:FF:000001">
    <property type="entry name" value="tRNA (guanine-N(1)-)-methyltransferase"/>
    <property type="match status" value="1"/>
</dbReference>
<dbReference type="Gene3D" id="3.40.1280.10">
    <property type="match status" value="1"/>
</dbReference>
<dbReference type="Gene3D" id="1.10.1270.20">
    <property type="entry name" value="tRNA(m1g37)methyltransferase, domain 2"/>
    <property type="match status" value="1"/>
</dbReference>
<dbReference type="HAMAP" id="MF_00605">
    <property type="entry name" value="TrmD"/>
    <property type="match status" value="1"/>
</dbReference>
<dbReference type="InterPro" id="IPR029028">
    <property type="entry name" value="Alpha/beta_knot_MTases"/>
</dbReference>
<dbReference type="InterPro" id="IPR023148">
    <property type="entry name" value="tRNA_m1G_MeTrfase_C_sf"/>
</dbReference>
<dbReference type="InterPro" id="IPR002649">
    <property type="entry name" value="tRNA_m1G_MeTrfase_TrmD"/>
</dbReference>
<dbReference type="InterPro" id="IPR029026">
    <property type="entry name" value="tRNA_m1G_MTases_N"/>
</dbReference>
<dbReference type="InterPro" id="IPR016009">
    <property type="entry name" value="tRNA_MeTrfase_TRMD/TRM10"/>
</dbReference>
<dbReference type="NCBIfam" id="NF000648">
    <property type="entry name" value="PRK00026.1"/>
    <property type="match status" value="1"/>
</dbReference>
<dbReference type="NCBIfam" id="TIGR00088">
    <property type="entry name" value="trmD"/>
    <property type="match status" value="1"/>
</dbReference>
<dbReference type="PANTHER" id="PTHR46417">
    <property type="entry name" value="TRNA (GUANINE-N(1)-)-METHYLTRANSFERASE"/>
    <property type="match status" value="1"/>
</dbReference>
<dbReference type="PANTHER" id="PTHR46417:SF1">
    <property type="entry name" value="TRNA (GUANINE-N(1)-)-METHYLTRANSFERASE"/>
    <property type="match status" value="1"/>
</dbReference>
<dbReference type="Pfam" id="PF01746">
    <property type="entry name" value="tRNA_m1G_MT"/>
    <property type="match status" value="1"/>
</dbReference>
<dbReference type="PIRSF" id="PIRSF000386">
    <property type="entry name" value="tRNA_mtase"/>
    <property type="match status" value="1"/>
</dbReference>
<dbReference type="SUPFAM" id="SSF75217">
    <property type="entry name" value="alpha/beta knot"/>
    <property type="match status" value="1"/>
</dbReference>
<reference key="1">
    <citation type="journal article" date="2003" name="Proc. Natl. Acad. Sci. U.S.A.">
        <title>Complete genome sequence of Lactobacillus plantarum WCFS1.</title>
        <authorList>
            <person name="Kleerebezem M."/>
            <person name="Boekhorst J."/>
            <person name="van Kranenburg R."/>
            <person name="Molenaar D."/>
            <person name="Kuipers O.P."/>
            <person name="Leer R."/>
            <person name="Tarchini R."/>
            <person name="Peters S.A."/>
            <person name="Sandbrink H.M."/>
            <person name="Fiers M.W.E.J."/>
            <person name="Stiekema W."/>
            <person name="Klein Lankhorst R.M."/>
            <person name="Bron P.A."/>
            <person name="Hoffer S.M."/>
            <person name="Nierop Groot M.N."/>
            <person name="Kerkhoven R."/>
            <person name="De Vries M."/>
            <person name="Ursing B."/>
            <person name="De Vos W.M."/>
            <person name="Siezen R.J."/>
        </authorList>
    </citation>
    <scope>NUCLEOTIDE SEQUENCE [LARGE SCALE GENOMIC DNA]</scope>
    <source>
        <strain>ATCC BAA-793 / NCIMB 8826 / WCFS1</strain>
    </source>
</reference>
<reference key="2">
    <citation type="journal article" date="2012" name="J. Bacteriol.">
        <title>Complete resequencing and reannotation of the Lactobacillus plantarum WCFS1 genome.</title>
        <authorList>
            <person name="Siezen R.J."/>
            <person name="Francke C."/>
            <person name="Renckens B."/>
            <person name="Boekhorst J."/>
            <person name="Wels M."/>
            <person name="Kleerebezem M."/>
            <person name="van Hijum S.A."/>
        </authorList>
    </citation>
    <scope>NUCLEOTIDE SEQUENCE [LARGE SCALE GENOMIC DNA]</scope>
    <scope>GENOME REANNOTATION</scope>
    <source>
        <strain>ATCC BAA-793 / NCIMB 8826 / WCFS1</strain>
    </source>
</reference>
<organism>
    <name type="scientific">Lactiplantibacillus plantarum (strain ATCC BAA-793 / NCIMB 8826 / WCFS1)</name>
    <name type="common">Lactobacillus plantarum</name>
    <dbReference type="NCBI Taxonomy" id="220668"/>
    <lineage>
        <taxon>Bacteria</taxon>
        <taxon>Bacillati</taxon>
        <taxon>Bacillota</taxon>
        <taxon>Bacilli</taxon>
        <taxon>Lactobacillales</taxon>
        <taxon>Lactobacillaceae</taxon>
        <taxon>Lactiplantibacillus</taxon>
    </lineage>
</organism>
<gene>
    <name evidence="1" type="primary">trmD</name>
    <name type="ordered locus">lp_1639</name>
</gene>
<feature type="chain" id="PRO_0000060393" description="tRNA (guanine-N(1)-)-methyltransferase">
    <location>
        <begin position="1"/>
        <end position="246"/>
    </location>
</feature>
<feature type="binding site" evidence="1">
    <location>
        <position position="113"/>
    </location>
    <ligand>
        <name>S-adenosyl-L-methionine</name>
        <dbReference type="ChEBI" id="CHEBI:59789"/>
    </ligand>
</feature>
<feature type="binding site" evidence="1">
    <location>
        <begin position="132"/>
        <end position="137"/>
    </location>
    <ligand>
        <name>S-adenosyl-L-methionine</name>
        <dbReference type="ChEBI" id="CHEBI:59789"/>
    </ligand>
</feature>